<gene>
    <name evidence="1" type="primary">hisD</name>
    <name type="ordered locus">Psyc_1902</name>
</gene>
<name>HISX_PSYA2</name>
<organism>
    <name type="scientific">Psychrobacter arcticus (strain DSM 17307 / VKM B-2377 / 273-4)</name>
    <dbReference type="NCBI Taxonomy" id="259536"/>
    <lineage>
        <taxon>Bacteria</taxon>
        <taxon>Pseudomonadati</taxon>
        <taxon>Pseudomonadota</taxon>
        <taxon>Gammaproteobacteria</taxon>
        <taxon>Moraxellales</taxon>
        <taxon>Moraxellaceae</taxon>
        <taxon>Psychrobacter</taxon>
    </lineage>
</organism>
<evidence type="ECO:0000255" key="1">
    <source>
        <dbReference type="HAMAP-Rule" id="MF_01024"/>
    </source>
</evidence>
<feature type="chain" id="PRO_0000135825" description="Histidinol dehydrogenase">
    <location>
        <begin position="1"/>
        <end position="431"/>
    </location>
</feature>
<feature type="active site" description="Proton acceptor" evidence="1">
    <location>
        <position position="329"/>
    </location>
</feature>
<feature type="active site" description="Proton acceptor" evidence="1">
    <location>
        <position position="330"/>
    </location>
</feature>
<feature type="binding site" evidence="1">
    <location>
        <position position="130"/>
    </location>
    <ligand>
        <name>NAD(+)</name>
        <dbReference type="ChEBI" id="CHEBI:57540"/>
    </ligand>
</feature>
<feature type="binding site" evidence="1">
    <location>
        <position position="191"/>
    </location>
    <ligand>
        <name>NAD(+)</name>
        <dbReference type="ChEBI" id="CHEBI:57540"/>
    </ligand>
</feature>
<feature type="binding site" evidence="1">
    <location>
        <position position="214"/>
    </location>
    <ligand>
        <name>NAD(+)</name>
        <dbReference type="ChEBI" id="CHEBI:57540"/>
    </ligand>
</feature>
<feature type="binding site" evidence="1">
    <location>
        <position position="237"/>
    </location>
    <ligand>
        <name>substrate</name>
    </ligand>
</feature>
<feature type="binding site" evidence="1">
    <location>
        <position position="261"/>
    </location>
    <ligand>
        <name>substrate</name>
    </ligand>
</feature>
<feature type="binding site" evidence="1">
    <location>
        <position position="261"/>
    </location>
    <ligand>
        <name>Zn(2+)</name>
        <dbReference type="ChEBI" id="CHEBI:29105"/>
    </ligand>
</feature>
<feature type="binding site" evidence="1">
    <location>
        <position position="264"/>
    </location>
    <ligand>
        <name>substrate</name>
    </ligand>
</feature>
<feature type="binding site" evidence="1">
    <location>
        <position position="264"/>
    </location>
    <ligand>
        <name>Zn(2+)</name>
        <dbReference type="ChEBI" id="CHEBI:29105"/>
    </ligand>
</feature>
<feature type="binding site" evidence="1">
    <location>
        <position position="330"/>
    </location>
    <ligand>
        <name>substrate</name>
    </ligand>
</feature>
<feature type="binding site" evidence="1">
    <location>
        <position position="363"/>
    </location>
    <ligand>
        <name>substrate</name>
    </ligand>
</feature>
<feature type="binding site" evidence="1">
    <location>
        <position position="363"/>
    </location>
    <ligand>
        <name>Zn(2+)</name>
        <dbReference type="ChEBI" id="CHEBI:29105"/>
    </ligand>
</feature>
<feature type="binding site" evidence="1">
    <location>
        <position position="417"/>
    </location>
    <ligand>
        <name>substrate</name>
    </ligand>
</feature>
<feature type="binding site" evidence="1">
    <location>
        <position position="422"/>
    </location>
    <ligand>
        <name>substrate</name>
    </ligand>
</feature>
<feature type="binding site" evidence="1">
    <location>
        <position position="422"/>
    </location>
    <ligand>
        <name>Zn(2+)</name>
        <dbReference type="ChEBI" id="CHEBI:29105"/>
    </ligand>
</feature>
<proteinExistence type="inferred from homology"/>
<comment type="function">
    <text evidence="1">Catalyzes the sequential NAD-dependent oxidations of L-histidinol to L-histidinaldehyde and then to L-histidine.</text>
</comment>
<comment type="catalytic activity">
    <reaction evidence="1">
        <text>L-histidinol + 2 NAD(+) + H2O = L-histidine + 2 NADH + 3 H(+)</text>
        <dbReference type="Rhea" id="RHEA:20641"/>
        <dbReference type="ChEBI" id="CHEBI:15377"/>
        <dbReference type="ChEBI" id="CHEBI:15378"/>
        <dbReference type="ChEBI" id="CHEBI:57540"/>
        <dbReference type="ChEBI" id="CHEBI:57595"/>
        <dbReference type="ChEBI" id="CHEBI:57699"/>
        <dbReference type="ChEBI" id="CHEBI:57945"/>
        <dbReference type="EC" id="1.1.1.23"/>
    </reaction>
</comment>
<comment type="cofactor">
    <cofactor evidence="1">
        <name>Zn(2+)</name>
        <dbReference type="ChEBI" id="CHEBI:29105"/>
    </cofactor>
    <text evidence="1">Binds 1 zinc ion per subunit.</text>
</comment>
<comment type="pathway">
    <text evidence="1">Amino-acid biosynthesis; L-histidine biosynthesis; L-histidine from 5-phospho-alpha-D-ribose 1-diphosphate: step 9/9.</text>
</comment>
<comment type="similarity">
    <text evidence="1">Belongs to the histidinol dehydrogenase family.</text>
</comment>
<reference key="1">
    <citation type="journal article" date="2010" name="Appl. Environ. Microbiol.">
        <title>The genome sequence of Psychrobacter arcticus 273-4, a psychroactive Siberian permafrost bacterium, reveals mechanisms for adaptation to low-temperature growth.</title>
        <authorList>
            <person name="Ayala-del-Rio H.L."/>
            <person name="Chain P.S."/>
            <person name="Grzymski J.J."/>
            <person name="Ponder M.A."/>
            <person name="Ivanova N."/>
            <person name="Bergholz P.W."/>
            <person name="Di Bartolo G."/>
            <person name="Hauser L."/>
            <person name="Land M."/>
            <person name="Bakermans C."/>
            <person name="Rodrigues D."/>
            <person name="Klappenbach J."/>
            <person name="Zarka D."/>
            <person name="Larimer F."/>
            <person name="Richardson P."/>
            <person name="Murray A."/>
            <person name="Thomashow M."/>
            <person name="Tiedje J.M."/>
        </authorList>
    </citation>
    <scope>NUCLEOTIDE SEQUENCE [LARGE SCALE GENOMIC DNA]</scope>
    <source>
        <strain>DSM 17307 / VKM B-2377 / 273-4</strain>
    </source>
</reference>
<sequence length="431" mass="46506">MRQLSTQDADFDSQLTELLAFETVNDATLLTTVDDIIARVRHGGDSVVLELTQQFDQHPATTTQALELSKEALAEAFANLDDVVKSALITAATRVKTFHERQVQETWQYEDELGNRLGQKVTALDRVGIYVPGGLASYPSSVLMNAIPAKVAGVKEVIMVVPAPKGVLNPLVLAAAHLAKVDRVFTIGGAQAVAALAYGTETIPAVDKITGPGNKYVAAAKRAVFGQVGIDMIAGPSEVLVYAEGEAQDRADWLAMDLLSQAEHDRIAQAIFVTTSAQQLKEVAIEIEKALAELPKADIARDSLKNRGVLILVRDREEGMAVINRVAPEHLELSVDHPDALLNSIRHAGAIFMGRHTPEAIGDYCAGPNHVLPTSGTARFSSPLGVYDFQKKSSIIYCSESGSKPLAQTADILAQHEDLEAHARSARYRYQ</sequence>
<keyword id="KW-0028">Amino-acid biosynthesis</keyword>
<keyword id="KW-0368">Histidine biosynthesis</keyword>
<keyword id="KW-0479">Metal-binding</keyword>
<keyword id="KW-0520">NAD</keyword>
<keyword id="KW-0560">Oxidoreductase</keyword>
<keyword id="KW-1185">Reference proteome</keyword>
<keyword id="KW-0862">Zinc</keyword>
<accession>Q4FQF8</accession>
<protein>
    <recommendedName>
        <fullName evidence="1">Histidinol dehydrogenase</fullName>
        <shortName evidence="1">HDH</shortName>
        <ecNumber evidence="1">1.1.1.23</ecNumber>
    </recommendedName>
</protein>
<dbReference type="EC" id="1.1.1.23" evidence="1"/>
<dbReference type="EMBL" id="CP000082">
    <property type="protein sequence ID" value="AAZ19750.1"/>
    <property type="molecule type" value="Genomic_DNA"/>
</dbReference>
<dbReference type="RefSeq" id="WP_011281159.1">
    <property type="nucleotide sequence ID" value="NC_007204.1"/>
</dbReference>
<dbReference type="SMR" id="Q4FQF8"/>
<dbReference type="STRING" id="259536.Psyc_1902"/>
<dbReference type="KEGG" id="par:Psyc_1902"/>
<dbReference type="eggNOG" id="COG0141">
    <property type="taxonomic scope" value="Bacteria"/>
</dbReference>
<dbReference type="HOGENOM" id="CLU_006732_3_3_6"/>
<dbReference type="OrthoDB" id="9805269at2"/>
<dbReference type="UniPathway" id="UPA00031">
    <property type="reaction ID" value="UER00014"/>
</dbReference>
<dbReference type="Proteomes" id="UP000000546">
    <property type="component" value="Chromosome"/>
</dbReference>
<dbReference type="GO" id="GO:0005829">
    <property type="term" value="C:cytosol"/>
    <property type="evidence" value="ECO:0007669"/>
    <property type="project" value="TreeGrafter"/>
</dbReference>
<dbReference type="GO" id="GO:0004399">
    <property type="term" value="F:histidinol dehydrogenase activity"/>
    <property type="evidence" value="ECO:0007669"/>
    <property type="project" value="UniProtKB-UniRule"/>
</dbReference>
<dbReference type="GO" id="GO:0051287">
    <property type="term" value="F:NAD binding"/>
    <property type="evidence" value="ECO:0007669"/>
    <property type="project" value="InterPro"/>
</dbReference>
<dbReference type="GO" id="GO:0008270">
    <property type="term" value="F:zinc ion binding"/>
    <property type="evidence" value="ECO:0007669"/>
    <property type="project" value="UniProtKB-UniRule"/>
</dbReference>
<dbReference type="GO" id="GO:0000105">
    <property type="term" value="P:L-histidine biosynthetic process"/>
    <property type="evidence" value="ECO:0007669"/>
    <property type="project" value="UniProtKB-UniRule"/>
</dbReference>
<dbReference type="CDD" id="cd06572">
    <property type="entry name" value="Histidinol_dh"/>
    <property type="match status" value="1"/>
</dbReference>
<dbReference type="FunFam" id="3.40.50.1980:FF:000001">
    <property type="entry name" value="Histidinol dehydrogenase"/>
    <property type="match status" value="1"/>
</dbReference>
<dbReference type="FunFam" id="3.40.50.1980:FF:000026">
    <property type="entry name" value="Histidinol dehydrogenase"/>
    <property type="match status" value="1"/>
</dbReference>
<dbReference type="Gene3D" id="1.20.5.1300">
    <property type="match status" value="1"/>
</dbReference>
<dbReference type="Gene3D" id="3.40.50.1980">
    <property type="entry name" value="Nitrogenase molybdenum iron protein domain"/>
    <property type="match status" value="2"/>
</dbReference>
<dbReference type="HAMAP" id="MF_01024">
    <property type="entry name" value="HisD"/>
    <property type="match status" value="1"/>
</dbReference>
<dbReference type="InterPro" id="IPR016161">
    <property type="entry name" value="Ald_DH/histidinol_DH"/>
</dbReference>
<dbReference type="InterPro" id="IPR001692">
    <property type="entry name" value="Histidinol_DH_CS"/>
</dbReference>
<dbReference type="InterPro" id="IPR022695">
    <property type="entry name" value="Histidinol_DH_monofunct"/>
</dbReference>
<dbReference type="InterPro" id="IPR012131">
    <property type="entry name" value="Hstdl_DH"/>
</dbReference>
<dbReference type="NCBIfam" id="TIGR00069">
    <property type="entry name" value="hisD"/>
    <property type="match status" value="1"/>
</dbReference>
<dbReference type="PANTHER" id="PTHR21256:SF2">
    <property type="entry name" value="HISTIDINE BIOSYNTHESIS TRIFUNCTIONAL PROTEIN"/>
    <property type="match status" value="1"/>
</dbReference>
<dbReference type="PANTHER" id="PTHR21256">
    <property type="entry name" value="HISTIDINOL DEHYDROGENASE HDH"/>
    <property type="match status" value="1"/>
</dbReference>
<dbReference type="Pfam" id="PF00815">
    <property type="entry name" value="Histidinol_dh"/>
    <property type="match status" value="1"/>
</dbReference>
<dbReference type="PIRSF" id="PIRSF000099">
    <property type="entry name" value="Histidinol_dh"/>
    <property type="match status" value="1"/>
</dbReference>
<dbReference type="PRINTS" id="PR00083">
    <property type="entry name" value="HOLDHDRGNASE"/>
</dbReference>
<dbReference type="SUPFAM" id="SSF53720">
    <property type="entry name" value="ALDH-like"/>
    <property type="match status" value="1"/>
</dbReference>
<dbReference type="PROSITE" id="PS00611">
    <property type="entry name" value="HISOL_DEHYDROGENASE"/>
    <property type="match status" value="1"/>
</dbReference>